<reference key="1">
    <citation type="journal article" date="2009" name="Appl. Environ. Microbiol.">
        <title>Genome analysis of the meat starter culture bacterium Staphylococcus carnosus TM300.</title>
        <authorList>
            <person name="Rosenstein R."/>
            <person name="Nerz C."/>
            <person name="Biswas L."/>
            <person name="Resch A."/>
            <person name="Raddatz G."/>
            <person name="Schuster S.C."/>
            <person name="Goetz F."/>
        </authorList>
    </citation>
    <scope>NUCLEOTIDE SEQUENCE [LARGE SCALE GENOMIC DNA]</scope>
    <source>
        <strain>TM300</strain>
    </source>
</reference>
<organism>
    <name type="scientific">Staphylococcus carnosus (strain TM300)</name>
    <dbReference type="NCBI Taxonomy" id="396513"/>
    <lineage>
        <taxon>Bacteria</taxon>
        <taxon>Bacillati</taxon>
        <taxon>Bacillota</taxon>
        <taxon>Bacilli</taxon>
        <taxon>Bacillales</taxon>
        <taxon>Staphylococcaceae</taxon>
        <taxon>Staphylococcus</taxon>
    </lineage>
</organism>
<protein>
    <recommendedName>
        <fullName evidence="1">N-acetylneuraminate lyase</fullName>
        <shortName evidence="1">NAL</shortName>
        <shortName evidence="1">Neu5Ac lyase</shortName>
        <ecNumber evidence="1">4.1.3.3</ecNumber>
    </recommendedName>
    <alternativeName>
        <fullName evidence="1">N-acetylneuraminate pyruvate-lyase</fullName>
    </alternativeName>
    <alternativeName>
        <fullName evidence="1">N-acetylneuraminic acid aldolase</fullName>
    </alternativeName>
    <alternativeName>
        <fullName evidence="1">Sialate lyase</fullName>
    </alternativeName>
    <alternativeName>
        <fullName evidence="1">Sialic acid aldolase</fullName>
    </alternativeName>
    <alternativeName>
        <fullName evidence="1">Sialic acid lyase</fullName>
    </alternativeName>
</protein>
<gene>
    <name evidence="1" type="primary">nanA</name>
    <name type="ordered locus">Sca_2389</name>
</gene>
<proteinExistence type="inferred from homology"/>
<accession>B9DIJ2</accession>
<feature type="chain" id="PRO_1000165006" description="N-acetylneuraminate lyase">
    <location>
        <begin position="1"/>
        <end position="293"/>
    </location>
</feature>
<feature type="active site" description="Proton donor" evidence="1">
    <location>
        <position position="137"/>
    </location>
</feature>
<feature type="active site" description="Schiff-base intermediate with substrate" evidence="1">
    <location>
        <position position="165"/>
    </location>
</feature>
<feature type="binding site" evidence="1">
    <location>
        <position position="48"/>
    </location>
    <ligand>
        <name>aceneuramate</name>
        <dbReference type="ChEBI" id="CHEBI:173083"/>
    </ligand>
</feature>
<feature type="binding site" evidence="1">
    <location>
        <position position="49"/>
    </location>
    <ligand>
        <name>aceneuramate</name>
        <dbReference type="ChEBI" id="CHEBI:173083"/>
    </ligand>
</feature>
<feature type="binding site" evidence="1">
    <location>
        <position position="167"/>
    </location>
    <ligand>
        <name>aceneuramate</name>
        <dbReference type="ChEBI" id="CHEBI:173083"/>
    </ligand>
</feature>
<feature type="binding site" evidence="1">
    <location>
        <position position="189"/>
    </location>
    <ligand>
        <name>aceneuramate</name>
        <dbReference type="ChEBI" id="CHEBI:173083"/>
    </ligand>
</feature>
<feature type="binding site" evidence="1">
    <location>
        <position position="191"/>
    </location>
    <ligand>
        <name>aceneuramate</name>
        <dbReference type="ChEBI" id="CHEBI:173083"/>
    </ligand>
</feature>
<feature type="binding site" evidence="1">
    <location>
        <position position="192"/>
    </location>
    <ligand>
        <name>aceneuramate</name>
        <dbReference type="ChEBI" id="CHEBI:173083"/>
    </ligand>
</feature>
<feature type="binding site" evidence="1">
    <location>
        <position position="208"/>
    </location>
    <ligand>
        <name>aceneuramate</name>
        <dbReference type="ChEBI" id="CHEBI:173083"/>
    </ligand>
</feature>
<dbReference type="EC" id="4.1.3.3" evidence="1"/>
<dbReference type="EMBL" id="AM295250">
    <property type="protein sequence ID" value="CAL29292.1"/>
    <property type="molecule type" value="Genomic_DNA"/>
</dbReference>
<dbReference type="RefSeq" id="WP_015901627.1">
    <property type="nucleotide sequence ID" value="NC_012121.1"/>
</dbReference>
<dbReference type="SMR" id="B9DIJ2"/>
<dbReference type="GeneID" id="93794831"/>
<dbReference type="KEGG" id="sca:SCA_2389"/>
<dbReference type="eggNOG" id="COG0329">
    <property type="taxonomic scope" value="Bacteria"/>
</dbReference>
<dbReference type="HOGENOM" id="CLU_049343_5_1_9"/>
<dbReference type="OrthoDB" id="9782828at2"/>
<dbReference type="BioCyc" id="SCAR396513:SCA_RS12010-MONOMER"/>
<dbReference type="BRENDA" id="4.1.3.3">
    <property type="organism ID" value="5873"/>
</dbReference>
<dbReference type="UniPathway" id="UPA00629">
    <property type="reaction ID" value="UER00680"/>
</dbReference>
<dbReference type="Proteomes" id="UP000000444">
    <property type="component" value="Chromosome"/>
</dbReference>
<dbReference type="GO" id="GO:0005829">
    <property type="term" value="C:cytosol"/>
    <property type="evidence" value="ECO:0007669"/>
    <property type="project" value="TreeGrafter"/>
</dbReference>
<dbReference type="GO" id="GO:0008747">
    <property type="term" value="F:N-acetylneuraminate lyase activity"/>
    <property type="evidence" value="ECO:0007669"/>
    <property type="project" value="UniProtKB-UniRule"/>
</dbReference>
<dbReference type="GO" id="GO:0005975">
    <property type="term" value="P:carbohydrate metabolic process"/>
    <property type="evidence" value="ECO:0007669"/>
    <property type="project" value="UniProtKB-UniRule"/>
</dbReference>
<dbReference type="GO" id="GO:0019262">
    <property type="term" value="P:N-acetylneuraminate catabolic process"/>
    <property type="evidence" value="ECO:0007669"/>
    <property type="project" value="UniProtKB-UniRule"/>
</dbReference>
<dbReference type="CDD" id="cd00954">
    <property type="entry name" value="NAL"/>
    <property type="match status" value="1"/>
</dbReference>
<dbReference type="Gene3D" id="3.20.20.70">
    <property type="entry name" value="Aldolase class I"/>
    <property type="match status" value="1"/>
</dbReference>
<dbReference type="HAMAP" id="MF_01237">
    <property type="entry name" value="N_acetylneuram_lyase"/>
    <property type="match status" value="1"/>
</dbReference>
<dbReference type="InterPro" id="IPR013785">
    <property type="entry name" value="Aldolase_TIM"/>
</dbReference>
<dbReference type="InterPro" id="IPR002220">
    <property type="entry name" value="DapA-like"/>
</dbReference>
<dbReference type="InterPro" id="IPR005264">
    <property type="entry name" value="NanA"/>
</dbReference>
<dbReference type="InterPro" id="IPR020625">
    <property type="entry name" value="Schiff_base-form_aldolases_AS"/>
</dbReference>
<dbReference type="NCBIfam" id="NF003164">
    <property type="entry name" value="PRK04147.1"/>
    <property type="match status" value="1"/>
</dbReference>
<dbReference type="PANTHER" id="PTHR42849">
    <property type="entry name" value="N-ACETYLNEURAMINATE LYASE"/>
    <property type="match status" value="1"/>
</dbReference>
<dbReference type="PANTHER" id="PTHR42849:SF1">
    <property type="entry name" value="N-ACETYLNEURAMINATE LYASE"/>
    <property type="match status" value="1"/>
</dbReference>
<dbReference type="Pfam" id="PF00701">
    <property type="entry name" value="DHDPS"/>
    <property type="match status" value="1"/>
</dbReference>
<dbReference type="PIRSF" id="PIRSF001365">
    <property type="entry name" value="DHDPS"/>
    <property type="match status" value="1"/>
</dbReference>
<dbReference type="PRINTS" id="PR00146">
    <property type="entry name" value="DHPICSNTHASE"/>
</dbReference>
<dbReference type="SMART" id="SM01130">
    <property type="entry name" value="DHDPS"/>
    <property type="match status" value="1"/>
</dbReference>
<dbReference type="SUPFAM" id="SSF51569">
    <property type="entry name" value="Aldolase"/>
    <property type="match status" value="1"/>
</dbReference>
<dbReference type="PROSITE" id="PS00666">
    <property type="entry name" value="DHDPS_2"/>
    <property type="match status" value="1"/>
</dbReference>
<sequence length="293" mass="32991">MEENLKGLYAALLVPFDENGQVKEEGLKAIAKNAIENEELDGLYVNGSSGENFLINTEQKKQIFKIAKEAVGDDVKMIAQIGSLDLNEAIELGKYATELGYDALSAVTPFYYPLSFEEIKQYYFDLIEATQNKMIIYSIPDLTGVNIDVDQFGELFNHEKIIGVKYTAPNFFLLERLRKAYPDKLIFSGFDEMLIQAVISGVDGAIGSTYNVNGKRSRQIFELAQQGKVDEAYQVQHETNDIIAKILELGLYPTLKEILKYRGIDSGLPKRPFAPFNEENRAALDELVNKYNL</sequence>
<comment type="function">
    <text evidence="1">Catalyzes the reversible aldol cleavage of N-acetylneuraminic acid (sialic acid; Neu5Ac) to form pyruvate and N-acetylmannosamine (ManNAc) via a Schiff base intermediate.</text>
</comment>
<comment type="catalytic activity">
    <reaction evidence="1">
        <text>aceneuramate = aldehydo-N-acetyl-D-mannosamine + pyruvate</text>
        <dbReference type="Rhea" id="RHEA:23296"/>
        <dbReference type="ChEBI" id="CHEBI:15361"/>
        <dbReference type="ChEBI" id="CHEBI:17122"/>
        <dbReference type="ChEBI" id="CHEBI:173083"/>
        <dbReference type="EC" id="4.1.3.3"/>
    </reaction>
</comment>
<comment type="pathway">
    <text evidence="1">Amino-sugar metabolism; N-acetylneuraminate degradation; D-fructose 6-phosphate from N-acetylneuraminate: step 1/5.</text>
</comment>
<comment type="subunit">
    <text evidence="1">Homotetramer.</text>
</comment>
<comment type="subcellular location">
    <subcellularLocation>
        <location evidence="1">Cytoplasm</location>
    </subcellularLocation>
</comment>
<comment type="similarity">
    <text evidence="1">Belongs to the DapA family. NanA subfamily.</text>
</comment>
<evidence type="ECO:0000255" key="1">
    <source>
        <dbReference type="HAMAP-Rule" id="MF_01237"/>
    </source>
</evidence>
<name>NANA_STACT</name>
<keyword id="KW-0119">Carbohydrate metabolism</keyword>
<keyword id="KW-0963">Cytoplasm</keyword>
<keyword id="KW-0456">Lyase</keyword>
<keyword id="KW-1185">Reference proteome</keyword>
<keyword id="KW-0704">Schiff base</keyword>